<gene>
    <name evidence="1" type="primary">rplN</name>
    <name type="ordered locus">Sputw3181_0166</name>
</gene>
<protein>
    <recommendedName>
        <fullName evidence="1">Large ribosomal subunit protein uL14</fullName>
    </recommendedName>
    <alternativeName>
        <fullName evidence="2">50S ribosomal protein L14</fullName>
    </alternativeName>
</protein>
<evidence type="ECO:0000255" key="1">
    <source>
        <dbReference type="HAMAP-Rule" id="MF_01367"/>
    </source>
</evidence>
<evidence type="ECO:0000305" key="2"/>
<comment type="function">
    <text evidence="1">Binds to 23S rRNA. Forms part of two intersubunit bridges in the 70S ribosome.</text>
</comment>
<comment type="subunit">
    <text evidence="1">Part of the 50S ribosomal subunit. Forms a cluster with proteins L3 and L19. In the 70S ribosome, L14 and L19 interact and together make contacts with the 16S rRNA in bridges B5 and B8.</text>
</comment>
<comment type="similarity">
    <text evidence="1">Belongs to the universal ribosomal protein uL14 family.</text>
</comment>
<proteinExistence type="inferred from homology"/>
<reference key="1">
    <citation type="submission" date="2006-12" db="EMBL/GenBank/DDBJ databases">
        <title>Complete sequence of Shewanella sp. W3-18-1.</title>
        <authorList>
            <consortium name="US DOE Joint Genome Institute"/>
            <person name="Copeland A."/>
            <person name="Lucas S."/>
            <person name="Lapidus A."/>
            <person name="Barry K."/>
            <person name="Detter J.C."/>
            <person name="Glavina del Rio T."/>
            <person name="Hammon N."/>
            <person name="Israni S."/>
            <person name="Dalin E."/>
            <person name="Tice H."/>
            <person name="Pitluck S."/>
            <person name="Chain P."/>
            <person name="Malfatti S."/>
            <person name="Shin M."/>
            <person name="Vergez L."/>
            <person name="Schmutz J."/>
            <person name="Larimer F."/>
            <person name="Land M."/>
            <person name="Hauser L."/>
            <person name="Kyrpides N."/>
            <person name="Lykidis A."/>
            <person name="Tiedje J."/>
            <person name="Richardson P."/>
        </authorList>
    </citation>
    <scope>NUCLEOTIDE SEQUENCE [LARGE SCALE GENOMIC DNA]</scope>
    <source>
        <strain>W3-18-1</strain>
    </source>
</reference>
<dbReference type="EMBL" id="CP000503">
    <property type="protein sequence ID" value="ABM23019.1"/>
    <property type="molecule type" value="Genomic_DNA"/>
</dbReference>
<dbReference type="RefSeq" id="WP_006083590.1">
    <property type="nucleotide sequence ID" value="NC_008750.1"/>
</dbReference>
<dbReference type="SMR" id="A1REC4"/>
<dbReference type="GeneID" id="75190608"/>
<dbReference type="KEGG" id="shw:Sputw3181_0166"/>
<dbReference type="HOGENOM" id="CLU_095071_2_1_6"/>
<dbReference type="Proteomes" id="UP000002597">
    <property type="component" value="Chromosome"/>
</dbReference>
<dbReference type="GO" id="GO:0022625">
    <property type="term" value="C:cytosolic large ribosomal subunit"/>
    <property type="evidence" value="ECO:0007669"/>
    <property type="project" value="TreeGrafter"/>
</dbReference>
<dbReference type="GO" id="GO:0070180">
    <property type="term" value="F:large ribosomal subunit rRNA binding"/>
    <property type="evidence" value="ECO:0007669"/>
    <property type="project" value="TreeGrafter"/>
</dbReference>
<dbReference type="GO" id="GO:0003735">
    <property type="term" value="F:structural constituent of ribosome"/>
    <property type="evidence" value="ECO:0007669"/>
    <property type="project" value="InterPro"/>
</dbReference>
<dbReference type="GO" id="GO:0006412">
    <property type="term" value="P:translation"/>
    <property type="evidence" value="ECO:0007669"/>
    <property type="project" value="UniProtKB-UniRule"/>
</dbReference>
<dbReference type="CDD" id="cd00337">
    <property type="entry name" value="Ribosomal_uL14"/>
    <property type="match status" value="1"/>
</dbReference>
<dbReference type="FunFam" id="2.40.150.20:FF:000001">
    <property type="entry name" value="50S ribosomal protein L14"/>
    <property type="match status" value="1"/>
</dbReference>
<dbReference type="Gene3D" id="2.40.150.20">
    <property type="entry name" value="Ribosomal protein L14"/>
    <property type="match status" value="1"/>
</dbReference>
<dbReference type="HAMAP" id="MF_01367">
    <property type="entry name" value="Ribosomal_uL14"/>
    <property type="match status" value="1"/>
</dbReference>
<dbReference type="InterPro" id="IPR000218">
    <property type="entry name" value="Ribosomal_uL14"/>
</dbReference>
<dbReference type="InterPro" id="IPR005745">
    <property type="entry name" value="Ribosomal_uL14_bac-type"/>
</dbReference>
<dbReference type="InterPro" id="IPR019972">
    <property type="entry name" value="Ribosomal_uL14_CS"/>
</dbReference>
<dbReference type="InterPro" id="IPR036853">
    <property type="entry name" value="Ribosomal_uL14_sf"/>
</dbReference>
<dbReference type="NCBIfam" id="TIGR01067">
    <property type="entry name" value="rplN_bact"/>
    <property type="match status" value="1"/>
</dbReference>
<dbReference type="PANTHER" id="PTHR11761">
    <property type="entry name" value="50S/60S RIBOSOMAL PROTEIN L14/L23"/>
    <property type="match status" value="1"/>
</dbReference>
<dbReference type="PANTHER" id="PTHR11761:SF3">
    <property type="entry name" value="LARGE RIBOSOMAL SUBUNIT PROTEIN UL14M"/>
    <property type="match status" value="1"/>
</dbReference>
<dbReference type="Pfam" id="PF00238">
    <property type="entry name" value="Ribosomal_L14"/>
    <property type="match status" value="1"/>
</dbReference>
<dbReference type="SMART" id="SM01374">
    <property type="entry name" value="Ribosomal_L14"/>
    <property type="match status" value="1"/>
</dbReference>
<dbReference type="SUPFAM" id="SSF50193">
    <property type="entry name" value="Ribosomal protein L14"/>
    <property type="match status" value="1"/>
</dbReference>
<dbReference type="PROSITE" id="PS00049">
    <property type="entry name" value="RIBOSOMAL_L14"/>
    <property type="match status" value="1"/>
</dbReference>
<name>RL14_SHESW</name>
<keyword id="KW-0687">Ribonucleoprotein</keyword>
<keyword id="KW-0689">Ribosomal protein</keyword>
<keyword id="KW-0694">RNA-binding</keyword>
<keyword id="KW-0699">rRNA-binding</keyword>
<feature type="chain" id="PRO_1000055701" description="Large ribosomal subunit protein uL14">
    <location>
        <begin position="1"/>
        <end position="122"/>
    </location>
</feature>
<accession>A1REC4</accession>
<organism>
    <name type="scientific">Shewanella sp. (strain W3-18-1)</name>
    <dbReference type="NCBI Taxonomy" id="351745"/>
    <lineage>
        <taxon>Bacteria</taxon>
        <taxon>Pseudomonadati</taxon>
        <taxon>Pseudomonadota</taxon>
        <taxon>Gammaproteobacteria</taxon>
        <taxon>Alteromonadales</taxon>
        <taxon>Shewanellaceae</taxon>
        <taxon>Shewanella</taxon>
    </lineage>
</organism>
<sequence>MIQMQSTLDVACNSGARRVQCIKVLGGSHRRYAGIGDIIKVSVKEAIPRAKAKKGDVYNAVVVRTKKGVRRPDGSVIRFDRNAAVLLNNNLQPIGTRIFGPVTRELRNEQFMKIVSLAPEVL</sequence>